<protein>
    <recommendedName>
        <fullName evidence="1">Ureidoglycolate lyase</fullName>
        <ecNumber evidence="1">4.3.2.3</ecNumber>
    </recommendedName>
    <alternativeName>
        <fullName evidence="1">Ureidoglycolatase</fullName>
    </alternativeName>
</protein>
<sequence>MTRITARPLTREAFAPFGDVIDMGGDNHYPINGGKAERYHDLATAEATGPNARVLISMVRGTPYELPLKLTMVERHPFGSQAFIPLSPRPFLVVVCHDGKEGPGEPYAFITAPGQGINYSRNLWHGVLTPLGEPQDFLIVDRGGDGSNLEEFHFSHAYEIHLP</sequence>
<name>ALLA_RHILO</name>
<proteinExistence type="inferred from homology"/>
<accession>Q98CJ0</accession>
<reference key="1">
    <citation type="journal article" date="2000" name="DNA Res.">
        <title>Complete genome structure of the nitrogen-fixing symbiotic bacterium Mesorhizobium loti.</title>
        <authorList>
            <person name="Kaneko T."/>
            <person name="Nakamura Y."/>
            <person name="Sato S."/>
            <person name="Asamizu E."/>
            <person name="Kato T."/>
            <person name="Sasamoto S."/>
            <person name="Watanabe A."/>
            <person name="Idesawa K."/>
            <person name="Ishikawa A."/>
            <person name="Kawashima K."/>
            <person name="Kimura T."/>
            <person name="Kishida Y."/>
            <person name="Kiyokawa C."/>
            <person name="Kohara M."/>
            <person name="Matsumoto M."/>
            <person name="Matsuno A."/>
            <person name="Mochizuki Y."/>
            <person name="Nakayama S."/>
            <person name="Nakazaki N."/>
            <person name="Shimpo S."/>
            <person name="Sugimoto M."/>
            <person name="Takeuchi C."/>
            <person name="Yamada M."/>
            <person name="Tabata S."/>
        </authorList>
    </citation>
    <scope>NUCLEOTIDE SEQUENCE [LARGE SCALE GENOMIC DNA]</scope>
    <source>
        <strain>LMG 29417 / CECT 9101 / MAFF 303099</strain>
    </source>
</reference>
<gene>
    <name evidence="1" type="primary">allA</name>
    <name type="ordered locus">mll5130</name>
</gene>
<dbReference type="EC" id="4.3.2.3" evidence="1"/>
<dbReference type="EMBL" id="BA000012">
    <property type="protein sequence ID" value="BAB51631.1"/>
    <property type="molecule type" value="Genomic_DNA"/>
</dbReference>
<dbReference type="RefSeq" id="WP_010912970.1">
    <property type="nucleotide sequence ID" value="NC_002678.2"/>
</dbReference>
<dbReference type="SMR" id="Q98CJ0"/>
<dbReference type="KEGG" id="mlo:mll5130"/>
<dbReference type="eggNOG" id="COG3194">
    <property type="taxonomic scope" value="Bacteria"/>
</dbReference>
<dbReference type="HOGENOM" id="CLU_070848_1_0_5"/>
<dbReference type="UniPathway" id="UPA00395"/>
<dbReference type="Proteomes" id="UP000000552">
    <property type="component" value="Chromosome"/>
</dbReference>
<dbReference type="GO" id="GO:0004848">
    <property type="term" value="F:ureidoglycolate hydrolase activity"/>
    <property type="evidence" value="ECO:0007669"/>
    <property type="project" value="InterPro"/>
</dbReference>
<dbReference type="GO" id="GO:0050385">
    <property type="term" value="F:ureidoglycolate lyase activity"/>
    <property type="evidence" value="ECO:0007669"/>
    <property type="project" value="UniProtKB-UniRule"/>
</dbReference>
<dbReference type="GO" id="GO:0000256">
    <property type="term" value="P:allantoin catabolic process"/>
    <property type="evidence" value="ECO:0007669"/>
    <property type="project" value="UniProtKB-UniRule"/>
</dbReference>
<dbReference type="GO" id="GO:0006145">
    <property type="term" value="P:purine nucleobase catabolic process"/>
    <property type="evidence" value="ECO:0007669"/>
    <property type="project" value="UniProtKB-UniRule"/>
</dbReference>
<dbReference type="CDD" id="cd20298">
    <property type="entry name" value="cupin_UAH"/>
    <property type="match status" value="1"/>
</dbReference>
<dbReference type="Gene3D" id="2.60.120.480">
    <property type="entry name" value="Ureidoglycolate hydrolase"/>
    <property type="match status" value="1"/>
</dbReference>
<dbReference type="HAMAP" id="MF_00616">
    <property type="entry name" value="Ureidogly_lyase"/>
    <property type="match status" value="1"/>
</dbReference>
<dbReference type="InterPro" id="IPR011051">
    <property type="entry name" value="RmlC_Cupin_sf"/>
</dbReference>
<dbReference type="InterPro" id="IPR047233">
    <property type="entry name" value="UAH_cupin"/>
</dbReference>
<dbReference type="InterPro" id="IPR007247">
    <property type="entry name" value="Ureidogly_lyase"/>
</dbReference>
<dbReference type="InterPro" id="IPR023525">
    <property type="entry name" value="Ureidogly_lyase_bac"/>
</dbReference>
<dbReference type="InterPro" id="IPR024060">
    <property type="entry name" value="Ureidoglycolate_lyase_dom_sf"/>
</dbReference>
<dbReference type="NCBIfam" id="NF009932">
    <property type="entry name" value="PRK13395.1"/>
    <property type="match status" value="1"/>
</dbReference>
<dbReference type="PANTHER" id="PTHR21221">
    <property type="entry name" value="UREIDOGLYCOLATE HYDROLASE"/>
    <property type="match status" value="1"/>
</dbReference>
<dbReference type="PANTHER" id="PTHR21221:SF1">
    <property type="entry name" value="UREIDOGLYCOLATE LYASE"/>
    <property type="match status" value="1"/>
</dbReference>
<dbReference type="Pfam" id="PF04115">
    <property type="entry name" value="Ureidogly_lyase"/>
    <property type="match status" value="1"/>
</dbReference>
<dbReference type="PIRSF" id="PIRSF017306">
    <property type="entry name" value="Ureidogly_hydro"/>
    <property type="match status" value="1"/>
</dbReference>
<dbReference type="SUPFAM" id="SSF51182">
    <property type="entry name" value="RmlC-like cupins"/>
    <property type="match status" value="1"/>
</dbReference>
<organism>
    <name type="scientific">Mesorhizobium japonicum (strain LMG 29417 / CECT 9101 / MAFF 303099)</name>
    <name type="common">Mesorhizobium loti (strain MAFF 303099)</name>
    <dbReference type="NCBI Taxonomy" id="266835"/>
    <lineage>
        <taxon>Bacteria</taxon>
        <taxon>Pseudomonadati</taxon>
        <taxon>Pseudomonadota</taxon>
        <taxon>Alphaproteobacteria</taxon>
        <taxon>Hyphomicrobiales</taxon>
        <taxon>Phyllobacteriaceae</taxon>
        <taxon>Mesorhizobium</taxon>
    </lineage>
</organism>
<comment type="function">
    <text evidence="1">Catalyzes the catabolism of the allantoin degradation intermediate (S)-ureidoglycolate, generating urea and glyoxylate. Involved in the utilization of allantoin as nitrogen source.</text>
</comment>
<comment type="catalytic activity">
    <reaction evidence="1">
        <text>(S)-ureidoglycolate = urea + glyoxylate</text>
        <dbReference type="Rhea" id="RHEA:11304"/>
        <dbReference type="ChEBI" id="CHEBI:16199"/>
        <dbReference type="ChEBI" id="CHEBI:36655"/>
        <dbReference type="ChEBI" id="CHEBI:57296"/>
        <dbReference type="EC" id="4.3.2.3"/>
    </reaction>
</comment>
<comment type="cofactor">
    <cofactor evidence="1">
        <name>Ni(2+)</name>
        <dbReference type="ChEBI" id="CHEBI:49786"/>
    </cofactor>
</comment>
<comment type="pathway">
    <text evidence="1">Nitrogen metabolism; (S)-allantoin degradation.</text>
</comment>
<comment type="subunit">
    <text evidence="1">Homodimer.</text>
</comment>
<comment type="similarity">
    <text evidence="1">Belongs to the ureidoglycolate lyase family.</text>
</comment>
<feature type="chain" id="PRO_0000120553" description="Ureidoglycolate lyase">
    <location>
        <begin position="1"/>
        <end position="163"/>
    </location>
</feature>
<evidence type="ECO:0000255" key="1">
    <source>
        <dbReference type="HAMAP-Rule" id="MF_00616"/>
    </source>
</evidence>
<keyword id="KW-0456">Lyase</keyword>
<keyword id="KW-0659">Purine metabolism</keyword>